<protein>
    <recommendedName>
        <fullName evidence="1">Protoheme IX farnesyltransferase</fullName>
        <ecNumber evidence="1">2.5.1.141</ecNumber>
    </recommendedName>
    <alternativeName>
        <fullName evidence="1">Heme B farnesyltransferase</fullName>
    </alternativeName>
    <alternativeName>
        <fullName evidence="1">Heme O synthase</fullName>
    </alternativeName>
</protein>
<accession>A1RZ10</accession>
<name>COXX_THEPD</name>
<sequence>MAPSAKDLLELFKVKQTALLLVTGVCAYLEGAGKPDPATLVLASLSMFLSIAGTTGFNMVLDADIDSAMFRTRNRPLPARRMSAKDAVLASSAALAAGLAAGVAVNPYVFVAGLLGFLIDIAVYTVLLKRKSPWSVVFGGFAGGMPALGGWAAATGGFGYQGVLLMLLVAVWSSLHIWTLSTYYSEDYRRAGVPMLPAVYGERAGVVASLAAAVAVFLVAFLAFRAGLISAVGFAVAAVPLVLAVAVLLKGLVSGEYREKAYRAFKLVNIFMGLFFVLLVLT</sequence>
<feature type="chain" id="PRO_0000346096" description="Protoheme IX farnesyltransferase">
    <location>
        <begin position="1"/>
        <end position="282"/>
    </location>
</feature>
<feature type="transmembrane region" description="Helical" evidence="1">
    <location>
        <begin position="40"/>
        <end position="60"/>
    </location>
</feature>
<feature type="transmembrane region" description="Helical" evidence="1">
    <location>
        <begin position="87"/>
        <end position="107"/>
    </location>
</feature>
<feature type="transmembrane region" description="Helical" evidence="1">
    <location>
        <begin position="108"/>
        <end position="128"/>
    </location>
</feature>
<feature type="transmembrane region" description="Helical" evidence="1">
    <location>
        <begin position="135"/>
        <end position="157"/>
    </location>
</feature>
<feature type="transmembrane region" description="Helical" evidence="1">
    <location>
        <begin position="162"/>
        <end position="184"/>
    </location>
</feature>
<feature type="transmembrane region" description="Helical" evidence="1">
    <location>
        <begin position="204"/>
        <end position="224"/>
    </location>
</feature>
<feature type="transmembrane region" description="Helical" evidence="1">
    <location>
        <begin position="228"/>
        <end position="248"/>
    </location>
</feature>
<feature type="transmembrane region" description="Helical" evidence="1">
    <location>
        <begin position="261"/>
        <end position="281"/>
    </location>
</feature>
<dbReference type="EC" id="2.5.1.141" evidence="1"/>
<dbReference type="EMBL" id="CP000505">
    <property type="protein sequence ID" value="ABL78440.1"/>
    <property type="molecule type" value="Genomic_DNA"/>
</dbReference>
<dbReference type="RefSeq" id="WP_011752705.1">
    <property type="nucleotide sequence ID" value="NC_008698.1"/>
</dbReference>
<dbReference type="SMR" id="A1RZ10"/>
<dbReference type="STRING" id="368408.Tpen_1040"/>
<dbReference type="EnsemblBacteria" id="ABL78440">
    <property type="protein sequence ID" value="ABL78440"/>
    <property type="gene ID" value="Tpen_1040"/>
</dbReference>
<dbReference type="GeneID" id="4600945"/>
<dbReference type="KEGG" id="tpe:Tpen_1040"/>
<dbReference type="eggNOG" id="arCOG00479">
    <property type="taxonomic scope" value="Archaea"/>
</dbReference>
<dbReference type="HOGENOM" id="CLU_029631_0_1_2"/>
<dbReference type="OrthoDB" id="131615at2157"/>
<dbReference type="UniPathway" id="UPA00834">
    <property type="reaction ID" value="UER00712"/>
</dbReference>
<dbReference type="Proteomes" id="UP000000641">
    <property type="component" value="Chromosome"/>
</dbReference>
<dbReference type="GO" id="GO:0005886">
    <property type="term" value="C:plasma membrane"/>
    <property type="evidence" value="ECO:0007669"/>
    <property type="project" value="UniProtKB-SubCell"/>
</dbReference>
<dbReference type="GO" id="GO:0008495">
    <property type="term" value="F:protoheme IX farnesyltransferase activity"/>
    <property type="evidence" value="ECO:0007669"/>
    <property type="project" value="UniProtKB-UniRule"/>
</dbReference>
<dbReference type="GO" id="GO:0048034">
    <property type="term" value="P:heme O biosynthetic process"/>
    <property type="evidence" value="ECO:0007669"/>
    <property type="project" value="UniProtKB-UniRule"/>
</dbReference>
<dbReference type="CDD" id="cd13957">
    <property type="entry name" value="PT_UbiA_Cox10"/>
    <property type="match status" value="1"/>
</dbReference>
<dbReference type="Gene3D" id="1.10.357.140">
    <property type="entry name" value="UbiA prenyltransferase"/>
    <property type="match status" value="1"/>
</dbReference>
<dbReference type="HAMAP" id="MF_00154">
    <property type="entry name" value="CyoE_CtaB"/>
    <property type="match status" value="1"/>
</dbReference>
<dbReference type="InterPro" id="IPR006369">
    <property type="entry name" value="Protohaem_IX_farnesylTrfase"/>
</dbReference>
<dbReference type="InterPro" id="IPR000537">
    <property type="entry name" value="UbiA_prenyltransferase"/>
</dbReference>
<dbReference type="InterPro" id="IPR030470">
    <property type="entry name" value="UbiA_prenylTrfase_CS"/>
</dbReference>
<dbReference type="InterPro" id="IPR044878">
    <property type="entry name" value="UbiA_sf"/>
</dbReference>
<dbReference type="NCBIfam" id="TIGR01473">
    <property type="entry name" value="cyoE_ctaB"/>
    <property type="match status" value="1"/>
</dbReference>
<dbReference type="PANTHER" id="PTHR43448">
    <property type="entry name" value="PROTOHEME IX FARNESYLTRANSFERASE, MITOCHONDRIAL"/>
    <property type="match status" value="1"/>
</dbReference>
<dbReference type="PANTHER" id="PTHR43448:SF2">
    <property type="entry name" value="PROTOHEME IX FARNESYLTRANSFERASE, MITOCHONDRIAL"/>
    <property type="match status" value="1"/>
</dbReference>
<dbReference type="Pfam" id="PF01040">
    <property type="entry name" value="UbiA"/>
    <property type="match status" value="1"/>
</dbReference>
<dbReference type="PROSITE" id="PS00943">
    <property type="entry name" value="UBIA"/>
    <property type="match status" value="1"/>
</dbReference>
<keyword id="KW-1003">Cell membrane</keyword>
<keyword id="KW-0350">Heme biosynthesis</keyword>
<keyword id="KW-0472">Membrane</keyword>
<keyword id="KW-1185">Reference proteome</keyword>
<keyword id="KW-0808">Transferase</keyword>
<keyword id="KW-0812">Transmembrane</keyword>
<keyword id="KW-1133">Transmembrane helix</keyword>
<evidence type="ECO:0000255" key="1">
    <source>
        <dbReference type="HAMAP-Rule" id="MF_00154"/>
    </source>
</evidence>
<comment type="function">
    <text evidence="1">Converts heme B (protoheme IX) to heme O by substitution of the vinyl group on carbon 2 of heme B porphyrin ring with a hydroxyethyl farnesyl side group.</text>
</comment>
<comment type="catalytic activity">
    <reaction evidence="1">
        <text>heme b + (2E,6E)-farnesyl diphosphate + H2O = Fe(II)-heme o + diphosphate</text>
        <dbReference type="Rhea" id="RHEA:28070"/>
        <dbReference type="ChEBI" id="CHEBI:15377"/>
        <dbReference type="ChEBI" id="CHEBI:33019"/>
        <dbReference type="ChEBI" id="CHEBI:60344"/>
        <dbReference type="ChEBI" id="CHEBI:60530"/>
        <dbReference type="ChEBI" id="CHEBI:175763"/>
        <dbReference type="EC" id="2.5.1.141"/>
    </reaction>
</comment>
<comment type="pathway">
    <text evidence="1">Porphyrin-containing compound metabolism; heme O biosynthesis; heme O from protoheme: step 1/1.</text>
</comment>
<comment type="subcellular location">
    <subcellularLocation>
        <location evidence="1">Cell membrane</location>
        <topology evidence="1">Multi-pass membrane protein</topology>
    </subcellularLocation>
</comment>
<comment type="miscellaneous">
    <text evidence="1">Carbon 2 of the heme B porphyrin ring is defined according to the Fischer nomenclature.</text>
</comment>
<comment type="similarity">
    <text evidence="1">Belongs to the UbiA prenyltransferase family. Protoheme IX farnesyltransferase subfamily.</text>
</comment>
<proteinExistence type="inferred from homology"/>
<reference key="1">
    <citation type="journal article" date="2008" name="J. Bacteriol.">
        <title>Genome sequence of Thermofilum pendens reveals an exceptional loss of biosynthetic pathways without genome reduction.</title>
        <authorList>
            <person name="Anderson I."/>
            <person name="Rodriguez J."/>
            <person name="Susanti D."/>
            <person name="Porat I."/>
            <person name="Reich C."/>
            <person name="Ulrich L.E."/>
            <person name="Elkins J.G."/>
            <person name="Mavromatis K."/>
            <person name="Lykidis A."/>
            <person name="Kim E."/>
            <person name="Thompson L.S."/>
            <person name="Nolan M."/>
            <person name="Land M."/>
            <person name="Copeland A."/>
            <person name="Lapidus A."/>
            <person name="Lucas S."/>
            <person name="Detter C."/>
            <person name="Zhulin I.B."/>
            <person name="Olsen G.J."/>
            <person name="Whitman W."/>
            <person name="Mukhopadhyay B."/>
            <person name="Bristow J."/>
            <person name="Kyrpides N."/>
        </authorList>
    </citation>
    <scope>NUCLEOTIDE SEQUENCE [LARGE SCALE GENOMIC DNA]</scope>
    <source>
        <strain>DSM 2475 / Hrk 5</strain>
    </source>
</reference>
<gene>
    <name evidence="1" type="primary">ctaB</name>
    <name type="ordered locus">Tpen_1040</name>
</gene>
<organism>
    <name type="scientific">Thermofilum pendens (strain DSM 2475 / Hrk 5)</name>
    <dbReference type="NCBI Taxonomy" id="368408"/>
    <lineage>
        <taxon>Archaea</taxon>
        <taxon>Thermoproteota</taxon>
        <taxon>Thermoprotei</taxon>
        <taxon>Thermofilales</taxon>
        <taxon>Thermofilaceae</taxon>
        <taxon>Thermofilum</taxon>
    </lineage>
</organism>